<organism>
    <name type="scientific">Staphylococcus aureus (strain MRSA252)</name>
    <dbReference type="NCBI Taxonomy" id="282458"/>
    <lineage>
        <taxon>Bacteria</taxon>
        <taxon>Bacillati</taxon>
        <taxon>Bacillota</taxon>
        <taxon>Bacilli</taxon>
        <taxon>Bacillales</taxon>
        <taxon>Staphylococcaceae</taxon>
        <taxon>Staphylococcus</taxon>
    </lineage>
</organism>
<evidence type="ECO:0000255" key="1">
    <source>
        <dbReference type="HAMAP-Rule" id="MF_00362"/>
    </source>
</evidence>
<evidence type="ECO:0000305" key="2"/>
<keyword id="KW-0687">Ribonucleoprotein</keyword>
<keyword id="KW-0689">Ribosomal protein</keyword>
<keyword id="KW-0694">RNA-binding</keyword>
<keyword id="KW-0699">rRNA-binding</keyword>
<sequence length="166" mass="17710">MSAIIEAKKQLVDEIAEVLSNSVSTVIVDYRGLTVAEVTDLRSQLREAGVEYKVYKNTMVRRAAEKAGIEGLDEFLTGPTAIATSSEDAVAAAKVISGFAKDHEALEIKSGVMEGNVITAEEVKTVGSLPSHDGLVSMLLSVLQAPVRNFAYAVKAIGEQKEENAE</sequence>
<dbReference type="EMBL" id="BX571856">
    <property type="protein sequence ID" value="CAG39565.1"/>
    <property type="molecule type" value="Genomic_DNA"/>
</dbReference>
<dbReference type="RefSeq" id="WP_001273085.1">
    <property type="nucleotide sequence ID" value="NC_002952.2"/>
</dbReference>
<dbReference type="SMR" id="Q6GJC9"/>
<dbReference type="KEGG" id="sar:SAR0544"/>
<dbReference type="HOGENOM" id="CLU_092227_2_0_9"/>
<dbReference type="Proteomes" id="UP000000596">
    <property type="component" value="Chromosome"/>
</dbReference>
<dbReference type="GO" id="GO:0015934">
    <property type="term" value="C:large ribosomal subunit"/>
    <property type="evidence" value="ECO:0007669"/>
    <property type="project" value="InterPro"/>
</dbReference>
<dbReference type="GO" id="GO:0070180">
    <property type="term" value="F:large ribosomal subunit rRNA binding"/>
    <property type="evidence" value="ECO:0007669"/>
    <property type="project" value="UniProtKB-UniRule"/>
</dbReference>
<dbReference type="GO" id="GO:0003735">
    <property type="term" value="F:structural constituent of ribosome"/>
    <property type="evidence" value="ECO:0007669"/>
    <property type="project" value="InterPro"/>
</dbReference>
<dbReference type="GO" id="GO:0006412">
    <property type="term" value="P:translation"/>
    <property type="evidence" value="ECO:0007669"/>
    <property type="project" value="UniProtKB-UniRule"/>
</dbReference>
<dbReference type="CDD" id="cd05797">
    <property type="entry name" value="Ribosomal_L10"/>
    <property type="match status" value="1"/>
</dbReference>
<dbReference type="FunFam" id="3.30.70.1730:FF:000001">
    <property type="entry name" value="50S ribosomal protein L10"/>
    <property type="match status" value="1"/>
</dbReference>
<dbReference type="Gene3D" id="3.30.70.1730">
    <property type="match status" value="1"/>
</dbReference>
<dbReference type="Gene3D" id="6.10.250.290">
    <property type="match status" value="1"/>
</dbReference>
<dbReference type="HAMAP" id="MF_00362">
    <property type="entry name" value="Ribosomal_uL10"/>
    <property type="match status" value="1"/>
</dbReference>
<dbReference type="InterPro" id="IPR001790">
    <property type="entry name" value="Ribosomal_uL10"/>
</dbReference>
<dbReference type="InterPro" id="IPR043141">
    <property type="entry name" value="Ribosomal_uL10-like_sf"/>
</dbReference>
<dbReference type="InterPro" id="IPR022973">
    <property type="entry name" value="Ribosomal_uL10_bac"/>
</dbReference>
<dbReference type="InterPro" id="IPR047865">
    <property type="entry name" value="Ribosomal_uL10_bac_type"/>
</dbReference>
<dbReference type="InterPro" id="IPR002363">
    <property type="entry name" value="Ribosomal_uL10_CS_bac"/>
</dbReference>
<dbReference type="NCBIfam" id="NF000955">
    <property type="entry name" value="PRK00099.1-1"/>
    <property type="match status" value="1"/>
</dbReference>
<dbReference type="PANTHER" id="PTHR11560">
    <property type="entry name" value="39S RIBOSOMAL PROTEIN L10, MITOCHONDRIAL"/>
    <property type="match status" value="1"/>
</dbReference>
<dbReference type="Pfam" id="PF00466">
    <property type="entry name" value="Ribosomal_L10"/>
    <property type="match status" value="1"/>
</dbReference>
<dbReference type="SUPFAM" id="SSF160369">
    <property type="entry name" value="Ribosomal protein L10-like"/>
    <property type="match status" value="1"/>
</dbReference>
<dbReference type="PROSITE" id="PS01109">
    <property type="entry name" value="RIBOSOMAL_L10"/>
    <property type="match status" value="1"/>
</dbReference>
<feature type="chain" id="PRO_0000154708" description="Large ribosomal subunit protein uL10">
    <location>
        <begin position="1"/>
        <end position="166"/>
    </location>
</feature>
<reference key="1">
    <citation type="journal article" date="2004" name="Proc. Natl. Acad. Sci. U.S.A.">
        <title>Complete genomes of two clinical Staphylococcus aureus strains: evidence for the rapid evolution of virulence and drug resistance.</title>
        <authorList>
            <person name="Holden M.T.G."/>
            <person name="Feil E.J."/>
            <person name="Lindsay J.A."/>
            <person name="Peacock S.J."/>
            <person name="Day N.P.J."/>
            <person name="Enright M.C."/>
            <person name="Foster T.J."/>
            <person name="Moore C.E."/>
            <person name="Hurst L."/>
            <person name="Atkin R."/>
            <person name="Barron A."/>
            <person name="Bason N."/>
            <person name="Bentley S.D."/>
            <person name="Chillingworth C."/>
            <person name="Chillingworth T."/>
            <person name="Churcher C."/>
            <person name="Clark L."/>
            <person name="Corton C."/>
            <person name="Cronin A."/>
            <person name="Doggett J."/>
            <person name="Dowd L."/>
            <person name="Feltwell T."/>
            <person name="Hance Z."/>
            <person name="Harris B."/>
            <person name="Hauser H."/>
            <person name="Holroyd S."/>
            <person name="Jagels K."/>
            <person name="James K.D."/>
            <person name="Lennard N."/>
            <person name="Line A."/>
            <person name="Mayes R."/>
            <person name="Moule S."/>
            <person name="Mungall K."/>
            <person name="Ormond D."/>
            <person name="Quail M.A."/>
            <person name="Rabbinowitsch E."/>
            <person name="Rutherford K.M."/>
            <person name="Sanders M."/>
            <person name="Sharp S."/>
            <person name="Simmonds M."/>
            <person name="Stevens K."/>
            <person name="Whitehead S."/>
            <person name="Barrell B.G."/>
            <person name="Spratt B.G."/>
            <person name="Parkhill J."/>
        </authorList>
    </citation>
    <scope>NUCLEOTIDE SEQUENCE [LARGE SCALE GENOMIC DNA]</scope>
    <source>
        <strain>MRSA252</strain>
    </source>
</reference>
<name>RL10_STAAR</name>
<accession>Q6GJC9</accession>
<comment type="function">
    <text evidence="1">Forms part of the ribosomal stalk, playing a central role in the interaction of the ribosome with GTP-bound translation factors.</text>
</comment>
<comment type="subunit">
    <text evidence="1">Part of the ribosomal stalk of the 50S ribosomal subunit. The N-terminus interacts with L11 and the large rRNA to form the base of the stalk. The C-terminus forms an elongated spine to which L12 dimers bind in a sequential fashion forming a multimeric L10(L12)X complex.</text>
</comment>
<comment type="similarity">
    <text evidence="1">Belongs to the universal ribosomal protein uL10 family.</text>
</comment>
<gene>
    <name evidence="1" type="primary">rplJ</name>
    <name type="ordered locus">SAR0544</name>
</gene>
<proteinExistence type="inferred from homology"/>
<protein>
    <recommendedName>
        <fullName evidence="1">Large ribosomal subunit protein uL10</fullName>
    </recommendedName>
    <alternativeName>
        <fullName evidence="2">50S ribosomal protein L10</fullName>
    </alternativeName>
</protein>